<reference key="1">
    <citation type="journal article" date="2002" name="Nature">
        <title>Genome sequence of the plant pathogen Ralstonia solanacearum.</title>
        <authorList>
            <person name="Salanoubat M."/>
            <person name="Genin S."/>
            <person name="Artiguenave F."/>
            <person name="Gouzy J."/>
            <person name="Mangenot S."/>
            <person name="Arlat M."/>
            <person name="Billault A."/>
            <person name="Brottier P."/>
            <person name="Camus J.-C."/>
            <person name="Cattolico L."/>
            <person name="Chandler M."/>
            <person name="Choisne N."/>
            <person name="Claudel-Renard C."/>
            <person name="Cunnac S."/>
            <person name="Demange N."/>
            <person name="Gaspin C."/>
            <person name="Lavie M."/>
            <person name="Moisan A."/>
            <person name="Robert C."/>
            <person name="Saurin W."/>
            <person name="Schiex T."/>
            <person name="Siguier P."/>
            <person name="Thebault P."/>
            <person name="Whalen M."/>
            <person name="Wincker P."/>
            <person name="Levy M."/>
            <person name="Weissenbach J."/>
            <person name="Boucher C.A."/>
        </authorList>
    </citation>
    <scope>NUCLEOTIDE SEQUENCE [LARGE SCALE GENOMIC DNA]</scope>
    <source>
        <strain>ATCC BAA-1114 / GMI1000</strain>
    </source>
</reference>
<organism>
    <name type="scientific">Ralstonia nicotianae (strain ATCC BAA-1114 / GMI1000)</name>
    <name type="common">Ralstonia solanacearum</name>
    <dbReference type="NCBI Taxonomy" id="267608"/>
    <lineage>
        <taxon>Bacteria</taxon>
        <taxon>Pseudomonadati</taxon>
        <taxon>Pseudomonadota</taxon>
        <taxon>Betaproteobacteria</taxon>
        <taxon>Burkholderiales</taxon>
        <taxon>Burkholderiaceae</taxon>
        <taxon>Ralstonia</taxon>
        <taxon>Ralstonia solanacearum species complex</taxon>
    </lineage>
</organism>
<dbReference type="EMBL" id="AL646052">
    <property type="protein sequence ID" value="CAD16649.1"/>
    <property type="molecule type" value="Genomic_DNA"/>
</dbReference>
<dbReference type="RefSeq" id="WP_011002847.1">
    <property type="nucleotide sequence ID" value="NC_003295.1"/>
</dbReference>
<dbReference type="SMR" id="Q8XV89"/>
<dbReference type="STRING" id="267608.RSc2942"/>
<dbReference type="EnsemblBacteria" id="CAD16649">
    <property type="protein sequence ID" value="CAD16649"/>
    <property type="gene ID" value="RSc2942"/>
</dbReference>
<dbReference type="GeneID" id="93851257"/>
<dbReference type="KEGG" id="rso:RSc2942"/>
<dbReference type="eggNOG" id="COG1826">
    <property type="taxonomic scope" value="Bacteria"/>
</dbReference>
<dbReference type="HOGENOM" id="CLU_086034_5_1_4"/>
<dbReference type="Proteomes" id="UP000001436">
    <property type="component" value="Chromosome"/>
</dbReference>
<dbReference type="GO" id="GO:0033281">
    <property type="term" value="C:TAT protein transport complex"/>
    <property type="evidence" value="ECO:0007669"/>
    <property type="project" value="UniProtKB-UniRule"/>
</dbReference>
<dbReference type="GO" id="GO:0008320">
    <property type="term" value="F:protein transmembrane transporter activity"/>
    <property type="evidence" value="ECO:0007669"/>
    <property type="project" value="UniProtKB-UniRule"/>
</dbReference>
<dbReference type="GO" id="GO:0043953">
    <property type="term" value="P:protein transport by the Tat complex"/>
    <property type="evidence" value="ECO:0007669"/>
    <property type="project" value="UniProtKB-UniRule"/>
</dbReference>
<dbReference type="Gene3D" id="1.20.5.3310">
    <property type="match status" value="1"/>
</dbReference>
<dbReference type="HAMAP" id="MF_00236">
    <property type="entry name" value="TatA_E"/>
    <property type="match status" value="1"/>
</dbReference>
<dbReference type="InterPro" id="IPR003369">
    <property type="entry name" value="TatA/B/E"/>
</dbReference>
<dbReference type="InterPro" id="IPR006312">
    <property type="entry name" value="TatA/E"/>
</dbReference>
<dbReference type="NCBIfam" id="NF002813">
    <property type="entry name" value="PRK02958.1"/>
    <property type="match status" value="1"/>
</dbReference>
<dbReference type="NCBIfam" id="TIGR01411">
    <property type="entry name" value="tatAE"/>
    <property type="match status" value="1"/>
</dbReference>
<dbReference type="PANTHER" id="PTHR42982">
    <property type="entry name" value="SEC-INDEPENDENT PROTEIN TRANSLOCASE PROTEIN TATA"/>
    <property type="match status" value="1"/>
</dbReference>
<dbReference type="PANTHER" id="PTHR42982:SF1">
    <property type="entry name" value="SEC-INDEPENDENT PROTEIN TRANSLOCASE PROTEIN TATA"/>
    <property type="match status" value="1"/>
</dbReference>
<dbReference type="Pfam" id="PF02416">
    <property type="entry name" value="TatA_B_E"/>
    <property type="match status" value="1"/>
</dbReference>
<comment type="function">
    <text evidence="1">Part of the twin-arginine translocation (Tat) system that transports large folded proteins containing a characteristic twin-arginine motif in their signal peptide across membranes. TatA could form the protein-conducting channel of the Tat system.</text>
</comment>
<comment type="subunit">
    <text evidence="1">The Tat system comprises two distinct complexes: a TatABC complex, containing multiple copies of TatA, TatB and TatC subunits, and a separate TatA complex, containing only TatA subunits. Substrates initially bind to the TatABC complex, which probably triggers association of the separate TatA complex to form the active translocon.</text>
</comment>
<comment type="subcellular location">
    <subcellularLocation>
        <location evidence="1">Cell inner membrane</location>
        <topology evidence="1">Single-pass membrane protein</topology>
    </subcellularLocation>
</comment>
<comment type="similarity">
    <text evidence="1">Belongs to the TatA/E family.</text>
</comment>
<sequence length="85" mass="9286">MGSFSIWHWLIVLLIIMMVFGTKKLRNIGSDLGSAVKGFKEGMREGSEDKPAGSQQGQQAAGQPPRELHDSTTIDVEARDKSKQG</sequence>
<protein>
    <recommendedName>
        <fullName evidence="1">Sec-independent protein translocase protein TatA</fullName>
    </recommendedName>
</protein>
<accession>Q8XV89</accession>
<gene>
    <name evidence="1" type="primary">tatA</name>
    <name type="ordered locus">RSc2942</name>
    <name type="ORF">RS00147</name>
</gene>
<keyword id="KW-0997">Cell inner membrane</keyword>
<keyword id="KW-1003">Cell membrane</keyword>
<keyword id="KW-0472">Membrane</keyword>
<keyword id="KW-0653">Protein transport</keyword>
<keyword id="KW-1185">Reference proteome</keyword>
<keyword id="KW-0811">Translocation</keyword>
<keyword id="KW-0812">Transmembrane</keyword>
<keyword id="KW-1133">Transmembrane helix</keyword>
<keyword id="KW-0813">Transport</keyword>
<name>TATA_RALN1</name>
<evidence type="ECO:0000255" key="1">
    <source>
        <dbReference type="HAMAP-Rule" id="MF_00236"/>
    </source>
</evidence>
<evidence type="ECO:0000256" key="2">
    <source>
        <dbReference type="SAM" id="MobiDB-lite"/>
    </source>
</evidence>
<feature type="chain" id="PRO_0000097952" description="Sec-independent protein translocase protein TatA">
    <location>
        <begin position="1"/>
        <end position="85"/>
    </location>
</feature>
<feature type="transmembrane region" description="Helical" evidence="1">
    <location>
        <begin position="1"/>
        <end position="21"/>
    </location>
</feature>
<feature type="region of interest" description="Disordered" evidence="2">
    <location>
        <begin position="39"/>
        <end position="85"/>
    </location>
</feature>
<feature type="compositionally biased region" description="Basic and acidic residues" evidence="2">
    <location>
        <begin position="39"/>
        <end position="51"/>
    </location>
</feature>
<feature type="compositionally biased region" description="Low complexity" evidence="2">
    <location>
        <begin position="52"/>
        <end position="65"/>
    </location>
</feature>
<feature type="compositionally biased region" description="Basic and acidic residues" evidence="2">
    <location>
        <begin position="66"/>
        <end position="85"/>
    </location>
</feature>
<proteinExistence type="inferred from homology"/>